<sequence length="545" mass="60547">MMGHRPVLVLSQNTKRESGRKVQSGNINAAKTIADIIRTCLGPKSMMKMLLDPMGGIVMTNDGNAILREIQVQHPAAKSMVEISRTQDEEVGDGTTSVIILAGEMLSVAEHFLEQQMHPTVVISAYRKALDDMISTLKKISIPVDINDSDMMLNIINSSITTKAISRWSSLACNIALDAVKMVQFEENGRKEIDIKKYARVEKIPGGIIEDSCVLRGVMINKDVTHPRMRRYIKNPRIVLLDSSLEYKKGESQTDIEITREEDFTRILQMEEEYIQQLCEDIIQLKPDVVITEKGISDLAQHYLMRANITAIRRVRKTDNNRIARACGARIVSRPEELREDDVGTGAGLLEIKKIGDEYFTFITDCKDPKACTILLRGASKEILSEVERNLQDAMQVCRNVLLDPQLVPGGGASEMAVAHALTEKSKAMTGVEQWPYRAVAQALEVIPRTLIQNCGASTIRLLTSLRAKHTQENCETWGVNGETGTLVDMKELGIWEPLAVKLQTYKTAVETAVLLLRIDDIVSGHKKKGDDQSRQGGAPDAGQE</sequence>
<feature type="chain" id="PRO_0000128324" description="T-complex protein 1 subunit gamma">
    <location>
        <begin position="1"/>
        <end position="545"/>
    </location>
</feature>
<feature type="region of interest" description="Disordered" evidence="4">
    <location>
        <begin position="1"/>
        <end position="24"/>
    </location>
</feature>
<feature type="region of interest" description="Disordered" evidence="4">
    <location>
        <begin position="526"/>
        <end position="545"/>
    </location>
</feature>
<feature type="binding site" evidence="2">
    <location>
        <position position="42"/>
    </location>
    <ligand>
        <name>ADP</name>
        <dbReference type="ChEBI" id="CHEBI:456216"/>
    </ligand>
</feature>
<feature type="binding site" evidence="2">
    <location>
        <position position="42"/>
    </location>
    <ligand>
        <name>ATP</name>
        <dbReference type="ChEBI" id="CHEBI:30616"/>
    </ligand>
</feature>
<feature type="binding site" evidence="2">
    <location>
        <position position="93"/>
    </location>
    <ligand>
        <name>Mg(2+)</name>
        <dbReference type="ChEBI" id="CHEBI:18420"/>
    </ligand>
</feature>
<feature type="binding site" evidence="2">
    <location>
        <position position="94"/>
    </location>
    <ligand>
        <name>ADP</name>
        <dbReference type="ChEBI" id="CHEBI:456216"/>
    </ligand>
</feature>
<feature type="binding site" evidence="2">
    <location>
        <position position="94"/>
    </location>
    <ligand>
        <name>ATP</name>
        <dbReference type="ChEBI" id="CHEBI:30616"/>
    </ligand>
</feature>
<feature type="binding site" evidence="2">
    <location>
        <position position="95"/>
    </location>
    <ligand>
        <name>ADP</name>
        <dbReference type="ChEBI" id="CHEBI:456216"/>
    </ligand>
</feature>
<feature type="binding site" evidence="2">
    <location>
        <position position="95"/>
    </location>
    <ligand>
        <name>ATP</name>
        <dbReference type="ChEBI" id="CHEBI:30616"/>
    </ligand>
</feature>
<feature type="binding site" evidence="2">
    <location>
        <position position="96"/>
    </location>
    <ligand>
        <name>ADP</name>
        <dbReference type="ChEBI" id="CHEBI:456216"/>
    </ligand>
</feature>
<feature type="binding site" evidence="2">
    <location>
        <position position="96"/>
    </location>
    <ligand>
        <name>ATP</name>
        <dbReference type="ChEBI" id="CHEBI:30616"/>
    </ligand>
</feature>
<feature type="binding site" evidence="2">
    <location>
        <position position="97"/>
    </location>
    <ligand>
        <name>ADP</name>
        <dbReference type="ChEBI" id="CHEBI:456216"/>
    </ligand>
</feature>
<feature type="binding site" evidence="2">
    <location>
        <position position="162"/>
    </location>
    <ligand>
        <name>ADP</name>
        <dbReference type="ChEBI" id="CHEBI:456216"/>
    </ligand>
</feature>
<feature type="binding site" evidence="2">
    <location>
        <position position="163"/>
    </location>
    <ligand>
        <name>ADP</name>
        <dbReference type="ChEBI" id="CHEBI:456216"/>
    </ligand>
</feature>
<feature type="binding site" evidence="2">
    <location>
        <position position="411"/>
    </location>
    <ligand>
        <name>ADP</name>
        <dbReference type="ChEBI" id="CHEBI:456216"/>
    </ligand>
</feature>
<feature type="binding site" evidence="2">
    <location>
        <position position="411"/>
    </location>
    <ligand>
        <name>ATP</name>
        <dbReference type="ChEBI" id="CHEBI:30616"/>
    </ligand>
</feature>
<feature type="binding site" evidence="2">
    <location>
        <position position="482"/>
    </location>
    <ligand>
        <name>ADP</name>
        <dbReference type="ChEBI" id="CHEBI:456216"/>
    </ligand>
</feature>
<feature type="binding site" evidence="2">
    <location>
        <position position="482"/>
    </location>
    <ligand>
        <name>ATP</name>
        <dbReference type="ChEBI" id="CHEBI:30616"/>
    </ligand>
</feature>
<feature type="binding site" evidence="2">
    <location>
        <position position="483"/>
    </location>
    <ligand>
        <name>ADP</name>
        <dbReference type="ChEBI" id="CHEBI:456216"/>
    </ligand>
</feature>
<feature type="binding site" evidence="2">
    <location>
        <position position="497"/>
    </location>
    <ligand>
        <name>ADP</name>
        <dbReference type="ChEBI" id="CHEBI:456216"/>
    </ligand>
</feature>
<feature type="binding site" evidence="2">
    <location>
        <position position="497"/>
    </location>
    <ligand>
        <name>ATP</name>
        <dbReference type="ChEBI" id="CHEBI:30616"/>
    </ligand>
</feature>
<feature type="binding site" evidence="2">
    <location>
        <position position="502"/>
    </location>
    <ligand>
        <name>ADP</name>
        <dbReference type="ChEBI" id="CHEBI:456216"/>
    </ligand>
</feature>
<feature type="modified residue" description="N-acetylmethionine" evidence="2">
    <location>
        <position position="1"/>
    </location>
</feature>
<feature type="modified residue" description="Phosphoserine" evidence="2">
    <location>
        <position position="11"/>
    </location>
</feature>
<feature type="modified residue" description="Phosphoserine" evidence="3">
    <location>
        <position position="170"/>
    </location>
</feature>
<feature type="modified residue" description="N6-acetyllysine" evidence="2">
    <location>
        <position position="222"/>
    </location>
</feature>
<feature type="modified residue" description="Phosphoserine" evidence="2">
    <location>
        <position position="243"/>
    </location>
</feature>
<feature type="modified residue" description="Phosphoserine" evidence="2">
    <location>
        <position position="244"/>
    </location>
</feature>
<feature type="modified residue" description="Phosphotyrosine" evidence="2">
    <location>
        <position position="247"/>
    </location>
</feature>
<feature type="modified residue" description="Phosphoserine" evidence="2">
    <location>
        <position position="252"/>
    </location>
</feature>
<feature type="modified residue" description="Phosphothreonine" evidence="2">
    <location>
        <position position="430"/>
    </location>
</feature>
<feature type="modified residue" description="Phosphothreonine" evidence="2">
    <location>
        <position position="459"/>
    </location>
</feature>
<feature type="disulfide bond" evidence="1">
    <location>
        <begin position="366"/>
        <end position="372"/>
    </location>
</feature>
<feature type="cross-link" description="Glycyl lysine isopeptide (Lys-Gly) (interchain with G-Cter in SUMO2)" evidence="2">
    <location>
        <position position="15"/>
    </location>
</feature>
<feature type="cross-link" description="Glycyl lysine isopeptide (Lys-Gly) (interchain with G-Cter in SUMO2)" evidence="2">
    <location>
        <position position="248"/>
    </location>
</feature>
<feature type="cross-link" description="Glycyl lysine isopeptide (Lys-Gly) (interchain with G-Cter in SUMO2)" evidence="2">
    <location>
        <position position="249"/>
    </location>
</feature>
<feature type="cross-link" description="Glycyl lysine isopeptide (Lys-Gly) (interchain with G-Cter in SUMO2)" evidence="2">
    <location>
        <position position="381"/>
    </location>
</feature>
<feature type="sequence conflict" description="In Ref. 1; CAH91676." evidence="5" ref="1">
    <original>V</original>
    <variation>I</variation>
    <location>
        <position position="81"/>
    </location>
</feature>
<feature type="sequence conflict" description="In Ref. 1; CAH91676." evidence="5" ref="1">
    <original>I</original>
    <variation>T</variation>
    <location>
        <position position="460"/>
    </location>
</feature>
<feature type="sequence conflict" description="In Ref. 1; CAH91676." evidence="5" ref="1">
    <original>Q</original>
    <variation>R</variation>
    <location>
        <position position="504"/>
    </location>
</feature>
<gene>
    <name type="primary">CCT3</name>
</gene>
<accession>Q5NVF9</accession>
<accession>Q5R984</accession>
<reference key="1">
    <citation type="submission" date="2004-11" db="EMBL/GenBank/DDBJ databases">
        <authorList>
            <consortium name="The German cDNA consortium"/>
        </authorList>
    </citation>
    <scope>NUCLEOTIDE SEQUENCE [LARGE SCALE MRNA]</scope>
    <source>
        <tissue>Brain cortex</tissue>
    </source>
</reference>
<evidence type="ECO:0000250" key="1"/>
<evidence type="ECO:0000250" key="2">
    <source>
        <dbReference type="UniProtKB" id="P49368"/>
    </source>
</evidence>
<evidence type="ECO:0000250" key="3">
    <source>
        <dbReference type="UniProtKB" id="P80318"/>
    </source>
</evidence>
<evidence type="ECO:0000256" key="4">
    <source>
        <dbReference type="SAM" id="MobiDB-lite"/>
    </source>
</evidence>
<evidence type="ECO:0000305" key="5"/>
<keyword id="KW-0007">Acetylation</keyword>
<keyword id="KW-0067">ATP-binding</keyword>
<keyword id="KW-0143">Chaperone</keyword>
<keyword id="KW-0963">Cytoplasm</keyword>
<keyword id="KW-1015">Disulfide bond</keyword>
<keyword id="KW-0378">Hydrolase</keyword>
<keyword id="KW-1017">Isopeptide bond</keyword>
<keyword id="KW-0460">Magnesium</keyword>
<keyword id="KW-0479">Metal-binding</keyword>
<keyword id="KW-0547">Nucleotide-binding</keyword>
<keyword id="KW-0597">Phosphoprotein</keyword>
<keyword id="KW-1185">Reference proteome</keyword>
<keyword id="KW-0832">Ubl conjugation</keyword>
<proteinExistence type="evidence at transcript level"/>
<dbReference type="EC" id="3.6.1.-" evidence="2"/>
<dbReference type="EMBL" id="CR859507">
    <property type="protein sequence ID" value="CAH91676.1"/>
    <property type="molecule type" value="mRNA"/>
</dbReference>
<dbReference type="EMBL" id="CR926077">
    <property type="protein sequence ID" value="CAI29704.1"/>
    <property type="molecule type" value="mRNA"/>
</dbReference>
<dbReference type="RefSeq" id="NP_001125981.1">
    <property type="nucleotide sequence ID" value="NM_001132509.1"/>
</dbReference>
<dbReference type="SMR" id="Q5NVF9"/>
<dbReference type="FunCoup" id="Q5NVF9">
    <property type="interactions" value="3860"/>
</dbReference>
<dbReference type="STRING" id="9601.ENSPPYP00000011901"/>
<dbReference type="GeneID" id="100172920"/>
<dbReference type="KEGG" id="pon:100172920"/>
<dbReference type="CTD" id="7203"/>
<dbReference type="eggNOG" id="KOG0364">
    <property type="taxonomic scope" value="Eukaryota"/>
</dbReference>
<dbReference type="InParanoid" id="Q5NVF9"/>
<dbReference type="OrthoDB" id="275057at2759"/>
<dbReference type="Proteomes" id="UP000001595">
    <property type="component" value="Unplaced"/>
</dbReference>
<dbReference type="GO" id="GO:0005832">
    <property type="term" value="C:chaperonin-containing T-complex"/>
    <property type="evidence" value="ECO:0000250"/>
    <property type="project" value="UniProtKB"/>
</dbReference>
<dbReference type="GO" id="GO:0005874">
    <property type="term" value="C:microtubule"/>
    <property type="evidence" value="ECO:0007669"/>
    <property type="project" value="UniProtKB-ARBA"/>
</dbReference>
<dbReference type="GO" id="GO:0005524">
    <property type="term" value="F:ATP binding"/>
    <property type="evidence" value="ECO:0007669"/>
    <property type="project" value="UniProtKB-KW"/>
</dbReference>
<dbReference type="GO" id="GO:0016887">
    <property type="term" value="F:ATP hydrolysis activity"/>
    <property type="evidence" value="ECO:0007669"/>
    <property type="project" value="InterPro"/>
</dbReference>
<dbReference type="GO" id="GO:0140662">
    <property type="term" value="F:ATP-dependent protein folding chaperone"/>
    <property type="evidence" value="ECO:0007669"/>
    <property type="project" value="InterPro"/>
</dbReference>
<dbReference type="GO" id="GO:0051082">
    <property type="term" value="F:unfolded protein binding"/>
    <property type="evidence" value="ECO:0007669"/>
    <property type="project" value="InterPro"/>
</dbReference>
<dbReference type="GO" id="GO:0032212">
    <property type="term" value="P:positive regulation of telomere maintenance via telomerase"/>
    <property type="evidence" value="ECO:0007669"/>
    <property type="project" value="UniProtKB-ARBA"/>
</dbReference>
<dbReference type="GO" id="GO:0050821">
    <property type="term" value="P:protein stabilization"/>
    <property type="evidence" value="ECO:0007669"/>
    <property type="project" value="UniProtKB-ARBA"/>
</dbReference>
<dbReference type="CDD" id="cd03337">
    <property type="entry name" value="TCP1_gamma"/>
    <property type="match status" value="1"/>
</dbReference>
<dbReference type="FunFam" id="1.10.560.10:FF:000069">
    <property type="entry name" value="T-complex protein 1 subunit gamma"/>
    <property type="match status" value="1"/>
</dbReference>
<dbReference type="FunFam" id="1.10.560.10:FF:000076">
    <property type="entry name" value="T-complex protein 1 subunit gamma"/>
    <property type="match status" value="1"/>
</dbReference>
<dbReference type="FunFam" id="3.50.7.10:FF:000005">
    <property type="entry name" value="T-complex protein 1 subunit gamma"/>
    <property type="match status" value="1"/>
</dbReference>
<dbReference type="Gene3D" id="3.50.7.10">
    <property type="entry name" value="GroEL"/>
    <property type="match status" value="1"/>
</dbReference>
<dbReference type="Gene3D" id="1.10.560.10">
    <property type="entry name" value="GroEL-like equatorial domain"/>
    <property type="match status" value="1"/>
</dbReference>
<dbReference type="Gene3D" id="3.30.260.10">
    <property type="entry name" value="TCP-1-like chaperonin intermediate domain"/>
    <property type="match status" value="1"/>
</dbReference>
<dbReference type="InterPro" id="IPR012719">
    <property type="entry name" value="Chap_CCT_gamma"/>
</dbReference>
<dbReference type="InterPro" id="IPR017998">
    <property type="entry name" value="Chaperone_TCP-1"/>
</dbReference>
<dbReference type="InterPro" id="IPR002194">
    <property type="entry name" value="Chaperonin_TCP-1_CS"/>
</dbReference>
<dbReference type="InterPro" id="IPR002423">
    <property type="entry name" value="Cpn60/GroEL/TCP-1"/>
</dbReference>
<dbReference type="InterPro" id="IPR027409">
    <property type="entry name" value="GroEL-like_apical_dom_sf"/>
</dbReference>
<dbReference type="InterPro" id="IPR027413">
    <property type="entry name" value="GROEL-like_equatorial_sf"/>
</dbReference>
<dbReference type="InterPro" id="IPR027410">
    <property type="entry name" value="TCP-1-like_intermed_sf"/>
</dbReference>
<dbReference type="InterPro" id="IPR053374">
    <property type="entry name" value="TCP-1_chaperonin"/>
</dbReference>
<dbReference type="InterPro" id="IPR054827">
    <property type="entry name" value="thermosome_alpha"/>
</dbReference>
<dbReference type="NCBIfam" id="TIGR02344">
    <property type="entry name" value="chap_CCT_gamma"/>
    <property type="match status" value="1"/>
</dbReference>
<dbReference type="NCBIfam" id="NF041082">
    <property type="entry name" value="thermosome_alpha"/>
    <property type="match status" value="1"/>
</dbReference>
<dbReference type="NCBIfam" id="NF041083">
    <property type="entry name" value="thermosome_beta"/>
    <property type="match status" value="1"/>
</dbReference>
<dbReference type="PANTHER" id="PTHR11353">
    <property type="entry name" value="CHAPERONIN"/>
    <property type="match status" value="1"/>
</dbReference>
<dbReference type="Pfam" id="PF00118">
    <property type="entry name" value="Cpn60_TCP1"/>
    <property type="match status" value="1"/>
</dbReference>
<dbReference type="PRINTS" id="PR00304">
    <property type="entry name" value="TCOMPLEXTCP1"/>
</dbReference>
<dbReference type="SUPFAM" id="SSF52029">
    <property type="entry name" value="GroEL apical domain-like"/>
    <property type="match status" value="1"/>
</dbReference>
<dbReference type="SUPFAM" id="SSF48592">
    <property type="entry name" value="GroEL equatorial domain-like"/>
    <property type="match status" value="1"/>
</dbReference>
<dbReference type="SUPFAM" id="SSF54849">
    <property type="entry name" value="GroEL-intermediate domain like"/>
    <property type="match status" value="1"/>
</dbReference>
<dbReference type="PROSITE" id="PS00750">
    <property type="entry name" value="TCP1_1"/>
    <property type="match status" value="1"/>
</dbReference>
<dbReference type="PROSITE" id="PS00751">
    <property type="entry name" value="TCP1_2"/>
    <property type="match status" value="1"/>
</dbReference>
<dbReference type="PROSITE" id="PS00995">
    <property type="entry name" value="TCP1_3"/>
    <property type="match status" value="1"/>
</dbReference>
<protein>
    <recommendedName>
        <fullName>T-complex protein 1 subunit gamma</fullName>
        <shortName>TCP-1-gamma</shortName>
        <ecNumber evidence="2">3.6.1.-</ecNumber>
    </recommendedName>
    <alternativeName>
        <fullName>CCT-gamma</fullName>
    </alternativeName>
</protein>
<name>TCPG_PONAB</name>
<organism>
    <name type="scientific">Pongo abelii</name>
    <name type="common">Sumatran orangutan</name>
    <name type="synonym">Pongo pygmaeus abelii</name>
    <dbReference type="NCBI Taxonomy" id="9601"/>
    <lineage>
        <taxon>Eukaryota</taxon>
        <taxon>Metazoa</taxon>
        <taxon>Chordata</taxon>
        <taxon>Craniata</taxon>
        <taxon>Vertebrata</taxon>
        <taxon>Euteleostomi</taxon>
        <taxon>Mammalia</taxon>
        <taxon>Eutheria</taxon>
        <taxon>Euarchontoglires</taxon>
        <taxon>Primates</taxon>
        <taxon>Haplorrhini</taxon>
        <taxon>Catarrhini</taxon>
        <taxon>Hominidae</taxon>
        <taxon>Pongo</taxon>
    </lineage>
</organism>
<comment type="function">
    <text evidence="2">Component of the chaperonin-containing T-complex (TRiC), a molecular chaperone complex that assists the folding of actin, tubulin and other proteins upon ATP hydrolysis. The TRiC complex mediates the folding of WRAP53/TCAB1, thereby regulating telomere maintenance. As part of the TRiC complex may play a role in the assembly of BBSome, a complex involved in ciliogenesis regulating transports vesicles to the cilia.</text>
</comment>
<comment type="catalytic activity">
    <reaction evidence="2">
        <text>ATP + H2O = ADP + phosphate + H(+)</text>
        <dbReference type="Rhea" id="RHEA:13065"/>
        <dbReference type="ChEBI" id="CHEBI:15377"/>
        <dbReference type="ChEBI" id="CHEBI:15378"/>
        <dbReference type="ChEBI" id="CHEBI:30616"/>
        <dbReference type="ChEBI" id="CHEBI:43474"/>
        <dbReference type="ChEBI" id="CHEBI:456216"/>
    </reaction>
</comment>
<comment type="subunit">
    <text evidence="2 3">Component of the chaperonin-containing T-complex (TRiC), a hexadecamer composed of two identical back-to-back stacked rings enclosing a protein folding chamber. Each ring is made up of eight different subunits: TCP1/CCT1, CCT2, CCT3, CCT4, CCT5, CCT6A/CCT6, CCT7, CCT8. Interacts with PACRG (By similarity). Interacts with DNAAF4 (By similarity). Interacts with DLEC1 (By similarity).</text>
</comment>
<comment type="subcellular location">
    <subcellularLocation>
        <location evidence="5">Cytoplasm</location>
    </subcellularLocation>
</comment>
<comment type="similarity">
    <text evidence="5">Belongs to the TCP-1 chaperonin family.</text>
</comment>